<protein>
    <recommendedName>
        <fullName>2S sulfur-rich seed storage protein 2</fullName>
    </recommendedName>
    <component>
        <recommendedName>
            <fullName>2S sulfur-rich seed storage protein small chain 2</fullName>
        </recommendedName>
        <alternativeName>
            <fullName>2S albumin 2 small subunit</fullName>
        </alternativeName>
    </component>
    <component>
        <recommendedName>
            <fullName>2S sulfur-rich seed storage protein large chain 2</fullName>
        </recommendedName>
        <alternativeName>
            <fullName>2S albumin 2 large subunit</fullName>
        </alternativeName>
    </component>
</protein>
<gene>
    <name type="primary">BE2S2</name>
</gene>
<organism>
    <name type="scientific">Bertholletia excelsa</name>
    <name type="common">Brazil nut</name>
    <dbReference type="NCBI Taxonomy" id="3645"/>
    <lineage>
        <taxon>Eukaryota</taxon>
        <taxon>Viridiplantae</taxon>
        <taxon>Streptophyta</taxon>
        <taxon>Embryophyta</taxon>
        <taxon>Tracheophyta</taxon>
        <taxon>Spermatophyta</taxon>
        <taxon>Magnoliopsida</taxon>
        <taxon>eudicotyledons</taxon>
        <taxon>Gunneridae</taxon>
        <taxon>Pentapetalae</taxon>
        <taxon>asterids</taxon>
        <taxon>Ericales</taxon>
        <taxon>Lecythidaceae</taxon>
        <taxon>Bertholletia</taxon>
    </lineage>
</organism>
<dbReference type="EMBL" id="X54491">
    <property type="protein sequence ID" value="CAA38363.1"/>
    <property type="molecule type" value="Genomic_DNA"/>
</dbReference>
<dbReference type="PIR" id="S14947">
    <property type="entry name" value="S14947"/>
</dbReference>
<dbReference type="SMR" id="P0C8Y8"/>
<dbReference type="Allergome" id="88">
    <property type="allergen name" value="Ber e 1"/>
</dbReference>
<dbReference type="GO" id="GO:0045735">
    <property type="term" value="F:nutrient reservoir activity"/>
    <property type="evidence" value="ECO:0007669"/>
    <property type="project" value="UniProtKB-KW"/>
</dbReference>
<dbReference type="CDD" id="cd00261">
    <property type="entry name" value="AAI_SS"/>
    <property type="match status" value="1"/>
</dbReference>
<dbReference type="Gene3D" id="1.10.110.10">
    <property type="entry name" value="Plant lipid-transfer and hydrophobic proteins"/>
    <property type="match status" value="1"/>
</dbReference>
<dbReference type="InterPro" id="IPR036312">
    <property type="entry name" value="Bifun_inhib/LTP/seed_sf"/>
</dbReference>
<dbReference type="InterPro" id="IPR016140">
    <property type="entry name" value="Bifunc_inhib/LTP/seed_store"/>
</dbReference>
<dbReference type="InterPro" id="IPR000617">
    <property type="entry name" value="Napin/2SS/CON"/>
</dbReference>
<dbReference type="PANTHER" id="PTHR35496">
    <property type="entry name" value="2S SEED STORAGE PROTEIN 1-RELATED"/>
    <property type="match status" value="1"/>
</dbReference>
<dbReference type="PANTHER" id="PTHR35496:SF4">
    <property type="entry name" value="2S SULFUR-RICH SEED STORAGE PROTEIN 2-LIKE"/>
    <property type="match status" value="1"/>
</dbReference>
<dbReference type="Pfam" id="PF00234">
    <property type="entry name" value="Tryp_alpha_amyl"/>
    <property type="match status" value="1"/>
</dbReference>
<dbReference type="PRINTS" id="PR00496">
    <property type="entry name" value="NAPIN"/>
</dbReference>
<dbReference type="SMART" id="SM00499">
    <property type="entry name" value="AAI"/>
    <property type="match status" value="1"/>
</dbReference>
<dbReference type="SUPFAM" id="SSF47699">
    <property type="entry name" value="Bifunctional inhibitor/lipid-transfer protein/seed storage 2S albumin"/>
    <property type="match status" value="1"/>
</dbReference>
<keyword id="KW-1015">Disulfide bond</keyword>
<keyword id="KW-0708">Seed storage protein</keyword>
<keyword id="KW-0732">Signal</keyword>
<keyword id="KW-0758">Storage protein</keyword>
<sequence>MAKMSVVAAALLALLVLGQATAFRTTVTTTLEEEQEENPRGRSEQQCREQMERQQQLNHCRMYLRQQMEESPYQNPRPLRRGEEPHLDECCEQLERMDEMCRCEGLRMMLRRQREEMELQGEQMQRIMRKAENLLSRCNLSPQRCPMGGYTAWL</sequence>
<accession>P0C8Y8</accession>
<name>2SS2_BEREX</name>
<comment type="function">
    <text>This is a 2S seed storage protein.</text>
</comment>
<comment type="subunit">
    <text>The mature protein consists of a small and a large chain linked by disulfide bonds.</text>
</comment>
<comment type="similarity">
    <text evidence="4">Belongs to the 2S seed storage albumins family.</text>
</comment>
<feature type="signal peptide" evidence="2">
    <location>
        <begin position="1"/>
        <end position="22"/>
    </location>
</feature>
<feature type="propeptide" id="PRO_0000367060" evidence="1">
    <location>
        <begin position="23"/>
        <end status="unknown"/>
    </location>
</feature>
<feature type="chain" id="PRO_0000367061" description="2S sulfur-rich seed storage protein small chain 2">
    <location>
        <begin status="unknown"/>
        <end position="71"/>
    </location>
</feature>
<feature type="propeptide" id="PRO_0000367062" evidence="1">
    <location>
        <begin position="72"/>
        <end position="76"/>
    </location>
</feature>
<feature type="chain" id="PRO_0000367063" description="2S sulfur-rich seed storage protein large chain 2">
    <location>
        <begin position="77"/>
        <end position="150"/>
    </location>
</feature>
<feature type="propeptide" id="PRO_0000367064" evidence="1">
    <location>
        <begin position="151"/>
        <end position="154"/>
    </location>
</feature>
<feature type="region of interest" description="Disordered" evidence="3">
    <location>
        <begin position="29"/>
        <end position="52"/>
    </location>
</feature>
<feature type="compositionally biased region" description="Basic and acidic residues" evidence="3">
    <location>
        <begin position="37"/>
        <end position="52"/>
    </location>
</feature>
<feature type="disulfide bond" description="Interchain (between small and large chains)" evidence="1">
    <location>
        <begin position="47"/>
        <end position="101"/>
    </location>
</feature>
<feature type="disulfide bond" description="Interchain (between small and large chains)" evidence="1">
    <location>
        <begin position="60"/>
        <end position="90"/>
    </location>
</feature>
<feature type="disulfide bond" evidence="1">
    <location>
        <begin position="91"/>
        <end position="138"/>
    </location>
</feature>
<feature type="disulfide bond" evidence="1">
    <location>
        <begin position="103"/>
        <end position="145"/>
    </location>
</feature>
<reference key="1">
    <citation type="journal article" date="1991" name="Plant Mol. Biol.">
        <title>Isolation, characterization and expression of a gene coding for a 2S albumin from Bertholletia excelsa (Brazil nut).</title>
        <authorList>
            <person name="Gander E.S."/>
            <person name="Holmstroem K.O."/>
            <person name="de Paiva G.R."/>
            <person name="de Castro L.A.B."/>
            <person name="Carneiro M."/>
            <person name="Grossi de Sa M.F."/>
        </authorList>
    </citation>
    <scope>NUCLEOTIDE SEQUENCE [GENOMIC DNA]</scope>
</reference>
<proteinExistence type="inferred from homology"/>
<evidence type="ECO:0000250" key="1"/>
<evidence type="ECO:0000255" key="2"/>
<evidence type="ECO:0000256" key="3">
    <source>
        <dbReference type="SAM" id="MobiDB-lite"/>
    </source>
</evidence>
<evidence type="ECO:0000305" key="4"/>